<evidence type="ECO:0000250" key="1"/>
<evidence type="ECO:0000255" key="2"/>
<evidence type="ECO:0000255" key="3">
    <source>
        <dbReference type="PROSITE-ProRule" id="PRU00107"/>
    </source>
</evidence>
<evidence type="ECO:0000255" key="4">
    <source>
        <dbReference type="PROSITE-ProRule" id="PRU00169"/>
    </source>
</evidence>
<evidence type="ECO:0000305" key="5"/>
<proteinExistence type="evidence at transcript level"/>
<organism>
    <name type="scientific">Solanum lycopersicum</name>
    <name type="common">Tomato</name>
    <name type="synonym">Lycopersicon esculentum</name>
    <dbReference type="NCBI Taxonomy" id="4081"/>
    <lineage>
        <taxon>Eukaryota</taxon>
        <taxon>Viridiplantae</taxon>
        <taxon>Streptophyta</taxon>
        <taxon>Embryophyta</taxon>
        <taxon>Tracheophyta</taxon>
        <taxon>Spermatophyta</taxon>
        <taxon>Magnoliopsida</taxon>
        <taxon>eudicotyledons</taxon>
        <taxon>Gunneridae</taxon>
        <taxon>Pentapetalae</taxon>
        <taxon>asterids</taxon>
        <taxon>lamiids</taxon>
        <taxon>Solanales</taxon>
        <taxon>Solanaceae</taxon>
        <taxon>Solanoideae</taxon>
        <taxon>Solaneae</taxon>
        <taxon>Solanum</taxon>
        <taxon>Solanum subgen. Lycopersicon</taxon>
    </lineage>
</organism>
<accession>O49187</accession>
<accession>Q41343</accession>
<name>ETR2_SOLLC</name>
<gene>
    <name type="primary">ETR2</name>
</gene>
<dbReference type="EC" id="2.7.13.3"/>
<dbReference type="EMBL" id="AF043085">
    <property type="protein sequence ID" value="AAC02214.1"/>
    <property type="molecule type" value="mRNA"/>
</dbReference>
<dbReference type="EMBL" id="U47279">
    <property type="protein sequence ID" value="AAB39386.1"/>
    <property type="molecule type" value="mRNA"/>
</dbReference>
<dbReference type="PIR" id="T06271">
    <property type="entry name" value="T06271"/>
</dbReference>
<dbReference type="RefSeq" id="NP_001234153.2">
    <property type="nucleotide sequence ID" value="NM_001247224.2"/>
</dbReference>
<dbReference type="SMR" id="O49187"/>
<dbReference type="FunCoup" id="O49187">
    <property type="interactions" value="904"/>
</dbReference>
<dbReference type="STRING" id="4081.O49187"/>
<dbReference type="PaxDb" id="4081-Solyc07g056580.2.1"/>
<dbReference type="GeneID" id="606299"/>
<dbReference type="KEGG" id="sly:606299"/>
<dbReference type="eggNOG" id="KOG0519">
    <property type="taxonomic scope" value="Eukaryota"/>
</dbReference>
<dbReference type="InParanoid" id="O49187"/>
<dbReference type="OrthoDB" id="60033at2759"/>
<dbReference type="BRENDA" id="2.7.13.3">
    <property type="organism ID" value="3101"/>
</dbReference>
<dbReference type="Proteomes" id="UP000004994">
    <property type="component" value="Unplaced"/>
</dbReference>
<dbReference type="ExpressionAtlas" id="O49187">
    <property type="expression patterns" value="baseline and differential"/>
</dbReference>
<dbReference type="GO" id="GO:0005783">
    <property type="term" value="C:endoplasmic reticulum"/>
    <property type="evidence" value="ECO:0000318"/>
    <property type="project" value="GO_Central"/>
</dbReference>
<dbReference type="GO" id="GO:0005789">
    <property type="term" value="C:endoplasmic reticulum membrane"/>
    <property type="evidence" value="ECO:0007669"/>
    <property type="project" value="UniProtKB-SubCell"/>
</dbReference>
<dbReference type="GO" id="GO:0005524">
    <property type="term" value="F:ATP binding"/>
    <property type="evidence" value="ECO:0007669"/>
    <property type="project" value="UniProtKB-KW"/>
</dbReference>
<dbReference type="GO" id="GO:0051740">
    <property type="term" value="F:ethylene binding"/>
    <property type="evidence" value="ECO:0000318"/>
    <property type="project" value="GO_Central"/>
</dbReference>
<dbReference type="GO" id="GO:0038199">
    <property type="term" value="F:ethylene receptor activity"/>
    <property type="evidence" value="ECO:0000318"/>
    <property type="project" value="GO_Central"/>
</dbReference>
<dbReference type="GO" id="GO:0046872">
    <property type="term" value="F:metal ion binding"/>
    <property type="evidence" value="ECO:0007669"/>
    <property type="project" value="UniProtKB-KW"/>
</dbReference>
<dbReference type="GO" id="GO:0000155">
    <property type="term" value="F:phosphorelay sensor kinase activity"/>
    <property type="evidence" value="ECO:0007669"/>
    <property type="project" value="InterPro"/>
</dbReference>
<dbReference type="GO" id="GO:0010105">
    <property type="term" value="P:negative regulation of ethylene-activated signaling pathway"/>
    <property type="evidence" value="ECO:0007669"/>
    <property type="project" value="UniProtKB-ARBA"/>
</dbReference>
<dbReference type="CDD" id="cd00082">
    <property type="entry name" value="HisKA"/>
    <property type="match status" value="1"/>
</dbReference>
<dbReference type="FunFam" id="3.40.50.2300:FF:000192">
    <property type="entry name" value="Ethylene receptor"/>
    <property type="match status" value="1"/>
</dbReference>
<dbReference type="FunFam" id="1.10.287.130:FF:000004">
    <property type="entry name" value="Ethylene receptor 1"/>
    <property type="match status" value="1"/>
</dbReference>
<dbReference type="FunFam" id="3.30.565.10:FF:000030">
    <property type="entry name" value="Ethylene receptor 1"/>
    <property type="match status" value="1"/>
</dbReference>
<dbReference type="FunFam" id="3.30.450.40:FF:000026">
    <property type="entry name" value="Ethylene response sensor"/>
    <property type="match status" value="1"/>
</dbReference>
<dbReference type="Gene3D" id="1.10.287.130">
    <property type="match status" value="1"/>
</dbReference>
<dbReference type="Gene3D" id="3.30.450.40">
    <property type="match status" value="1"/>
</dbReference>
<dbReference type="Gene3D" id="3.40.50.2300">
    <property type="match status" value="1"/>
</dbReference>
<dbReference type="Gene3D" id="3.30.565.10">
    <property type="entry name" value="Histidine kinase-like ATPase, C-terminal domain"/>
    <property type="match status" value="1"/>
</dbReference>
<dbReference type="InterPro" id="IPR011006">
    <property type="entry name" value="CheY-like_superfamily"/>
</dbReference>
<dbReference type="InterPro" id="IPR014525">
    <property type="entry name" value="ETR"/>
</dbReference>
<dbReference type="InterPro" id="IPR003018">
    <property type="entry name" value="GAF"/>
</dbReference>
<dbReference type="InterPro" id="IPR029016">
    <property type="entry name" value="GAF-like_dom_sf"/>
</dbReference>
<dbReference type="InterPro" id="IPR036890">
    <property type="entry name" value="HATPase_C_sf"/>
</dbReference>
<dbReference type="InterPro" id="IPR005467">
    <property type="entry name" value="His_kinase_dom"/>
</dbReference>
<dbReference type="InterPro" id="IPR003661">
    <property type="entry name" value="HisK_dim/P_dom"/>
</dbReference>
<dbReference type="InterPro" id="IPR036097">
    <property type="entry name" value="HisK_dim/P_sf"/>
</dbReference>
<dbReference type="InterPro" id="IPR004358">
    <property type="entry name" value="Sig_transdc_His_kin-like_C"/>
</dbReference>
<dbReference type="InterPro" id="IPR001789">
    <property type="entry name" value="Sig_transdc_resp-reg_receiver"/>
</dbReference>
<dbReference type="PANTHER" id="PTHR24423:SF615">
    <property type="entry name" value="ETHYLENE RECEPTOR 1"/>
    <property type="match status" value="1"/>
</dbReference>
<dbReference type="PANTHER" id="PTHR24423">
    <property type="entry name" value="TWO-COMPONENT SENSOR HISTIDINE KINASE"/>
    <property type="match status" value="1"/>
</dbReference>
<dbReference type="Pfam" id="PF25487">
    <property type="entry name" value="ETR1_N"/>
    <property type="match status" value="1"/>
</dbReference>
<dbReference type="Pfam" id="PF01590">
    <property type="entry name" value="GAF"/>
    <property type="match status" value="1"/>
</dbReference>
<dbReference type="Pfam" id="PF02518">
    <property type="entry name" value="HATPase_c"/>
    <property type="match status" value="1"/>
</dbReference>
<dbReference type="Pfam" id="PF00512">
    <property type="entry name" value="HisKA"/>
    <property type="match status" value="1"/>
</dbReference>
<dbReference type="Pfam" id="PF00072">
    <property type="entry name" value="Response_reg"/>
    <property type="match status" value="1"/>
</dbReference>
<dbReference type="PIRSF" id="PIRSF026389">
    <property type="entry name" value="Ethyln_sen_HK"/>
    <property type="match status" value="1"/>
</dbReference>
<dbReference type="PRINTS" id="PR00344">
    <property type="entry name" value="BCTRLSENSOR"/>
</dbReference>
<dbReference type="SMART" id="SM00065">
    <property type="entry name" value="GAF"/>
    <property type="match status" value="1"/>
</dbReference>
<dbReference type="SMART" id="SM00387">
    <property type="entry name" value="HATPase_c"/>
    <property type="match status" value="1"/>
</dbReference>
<dbReference type="SMART" id="SM00388">
    <property type="entry name" value="HisKA"/>
    <property type="match status" value="1"/>
</dbReference>
<dbReference type="SMART" id="SM00448">
    <property type="entry name" value="REC"/>
    <property type="match status" value="1"/>
</dbReference>
<dbReference type="SUPFAM" id="SSF55874">
    <property type="entry name" value="ATPase domain of HSP90 chaperone/DNA topoisomerase II/histidine kinase"/>
    <property type="match status" value="1"/>
</dbReference>
<dbReference type="SUPFAM" id="SSF52172">
    <property type="entry name" value="CheY-like"/>
    <property type="match status" value="1"/>
</dbReference>
<dbReference type="SUPFAM" id="SSF55781">
    <property type="entry name" value="GAF domain-like"/>
    <property type="match status" value="1"/>
</dbReference>
<dbReference type="SUPFAM" id="SSF47384">
    <property type="entry name" value="Homodimeric domain of signal transducing histidine kinase"/>
    <property type="match status" value="1"/>
</dbReference>
<dbReference type="PROSITE" id="PS50109">
    <property type="entry name" value="HIS_KIN"/>
    <property type="match status" value="1"/>
</dbReference>
<dbReference type="PROSITE" id="PS50110">
    <property type="entry name" value="RESPONSE_REGULATORY"/>
    <property type="match status" value="1"/>
</dbReference>
<keyword id="KW-0067">ATP-binding</keyword>
<keyword id="KW-0186">Copper</keyword>
<keyword id="KW-1015">Disulfide bond</keyword>
<keyword id="KW-0256">Endoplasmic reticulum</keyword>
<keyword id="KW-0936">Ethylene signaling pathway</keyword>
<keyword id="KW-0418">Kinase</keyword>
<keyword id="KW-0472">Membrane</keyword>
<keyword id="KW-0479">Metal-binding</keyword>
<keyword id="KW-0547">Nucleotide-binding</keyword>
<keyword id="KW-0597">Phosphoprotein</keyword>
<keyword id="KW-0675">Receptor</keyword>
<keyword id="KW-1185">Reference proteome</keyword>
<keyword id="KW-0808">Transferase</keyword>
<keyword id="KW-0812">Transmembrane</keyword>
<keyword id="KW-1133">Transmembrane helix</keyword>
<keyword id="KW-0902">Two-component regulatory system</keyword>
<sequence>MDCNCFDPLLPADELLMKYQYISDFFIAVAYFSIPIELVYFVQKSAVFPYRWVLVQFGAFIVLCGATHLINLWTSTPHTRTVAMVMTTAKFSTAAVSCATAVMLVHIIPDLLSVKTRELFLKNKAAELDREMGLIRTQEETGRYVRMLTHEIRSTLDRHTILKTTLVELGRALQLEECALWMPTRTGVELQLSYTLHHQNPVGFTVPIQLPVINQVFSANCAVKISPNSAVARLRPTRKYIPGEVVAVRVPLLHLSNFQTNDWPELSPKSYALMVLMLPSNSARQWHVHELELVDVVADQVAVALSHAAILEESMRARDLLIEQNVALDLARREAETAVRARNDFLGVMNHEMRTPMHAVVALSSLLQESELIPEQRLMVETILKSSNLLATLINDVLDLSRLEDGSLQLDVGTFNLHALFREVLNLIKPVAAVKKLFVTLSLSSDFPEVAIGDEKRLMQILLNVVGNAVKFSKEGSVSVSAVNAKSESLIDPRAPEFFPVQSENHFYLRVQVKDTGSGINPQDFPKLFCKFAQNQEPATKNSAGTGLGLAICKRFVNLMEGHIWIESEGVGKGSTAIFIVKLGIPGRLNESKLPFTAGLPANHMQMTFQGLKVLVMDDNGFSRMVTKSLLVHLGCDVTTIGSGDECLRILTREHKVLIMDASITGMNCYDVAVSVHEKFGKRLERPLIVALTGNTDQVTKENCLRVGMDGVILKPVSIDKMRSVLSGLLEHGTVL</sequence>
<reference key="1">
    <citation type="journal article" date="1998" name="Plant J.">
        <title>Differential regulation of the tomato ETR gene family throughout plant development.</title>
        <authorList>
            <person name="Lashbrook C.C."/>
            <person name="Tieman D.M."/>
            <person name="Klee H.J."/>
        </authorList>
    </citation>
    <scope>NUCLEOTIDE SEQUENCE [MRNA]</scope>
    <source>
        <strain>cv. Rutgers</strain>
        <tissue>Root</tissue>
    </source>
</reference>
<reference key="2">
    <citation type="online journal article" date="1996" name="Plant Gene Register">
        <title>Molecular cloning of a tomato cDNA encoding an ethylene receptor.</title>
        <authorList>
            <person name="Zhou D."/>
            <person name="Mattoo A.K."/>
            <person name="Tucker M.L."/>
        </authorList>
        <locator>PGR96-015</locator>
    </citation>
    <scope>NUCLEOTIDE SEQUENCE [MRNA] OF 31-736</scope>
    <source>
        <strain>cv. UC82B</strain>
    </source>
</reference>
<comment type="function">
    <text evidence="1">May act early in the ethylene signal transduction pathway, possibly as an ethylene receptor, or as a regulator of the pathway.</text>
</comment>
<comment type="catalytic activity">
    <reaction>
        <text>ATP + protein L-histidine = ADP + protein N-phospho-L-histidine.</text>
        <dbReference type="EC" id="2.7.13.3"/>
    </reaction>
</comment>
<comment type="cofactor">
    <cofactor evidence="1">
        <name>Cu cation</name>
        <dbReference type="ChEBI" id="CHEBI:23378"/>
    </cofactor>
    <text evidence="1">Binds 1 copper ion per dimer.</text>
</comment>
<comment type="subunit">
    <text evidence="1">Homodimer; disulfide-linked.</text>
</comment>
<comment type="subcellular location">
    <subcellularLocation>
        <location evidence="1">Endoplasmic reticulum membrane</location>
        <topology evidence="1">Multi-pass membrane protein</topology>
    </subcellularLocation>
</comment>
<comment type="tissue specificity">
    <text>Leaves, flowers and fruits.</text>
</comment>
<comment type="developmental stage">
    <text>Induced in imbibing seeds prior to germination and down-regulated in elongating seedlings and senescing leaf petioles.</text>
</comment>
<comment type="induction">
    <text>Not induced by ethylene.</text>
</comment>
<comment type="PTM">
    <text evidence="1">Activation probably requires a transfer of a phosphate group between a His in the transmitter domain and an Asp of the receiver domain.</text>
</comment>
<comment type="similarity">
    <text evidence="5">Belongs to the ethylene receptor family.</text>
</comment>
<protein>
    <recommendedName>
        <fullName>Ethylene receptor 2</fullName>
        <shortName>LeETR2</shortName>
        <ecNumber>2.7.13.3</ecNumber>
    </recommendedName>
</protein>
<feature type="chain" id="PRO_0000081417" description="Ethylene receptor 2">
    <location>
        <begin position="1"/>
        <end position="736"/>
    </location>
</feature>
<feature type="transmembrane region" description="Helical" evidence="2">
    <location>
        <begin position="22"/>
        <end position="42"/>
    </location>
</feature>
<feature type="transmembrane region" description="Helical" evidence="2">
    <location>
        <begin position="53"/>
        <end position="73"/>
    </location>
</feature>
<feature type="transmembrane region" description="Helical" evidence="2">
    <location>
        <begin position="94"/>
        <end position="114"/>
    </location>
</feature>
<feature type="domain" description="GAF">
    <location>
        <begin position="157"/>
        <end position="305"/>
    </location>
</feature>
<feature type="domain" description="Histidine kinase" evidence="3">
    <location>
        <begin position="348"/>
        <end position="585"/>
    </location>
</feature>
<feature type="domain" description="Response regulatory" evidence="4">
    <location>
        <begin position="613"/>
        <end position="730"/>
    </location>
</feature>
<feature type="binding site" evidence="1">
    <location>
        <position position="64"/>
    </location>
    <ligand>
        <name>Cu cation</name>
        <dbReference type="ChEBI" id="CHEBI:23378"/>
    </ligand>
</feature>
<feature type="binding site" evidence="1">
    <location>
        <position position="68"/>
    </location>
    <ligand>
        <name>Cu cation</name>
        <dbReference type="ChEBI" id="CHEBI:23378"/>
    </ligand>
</feature>
<feature type="modified residue" description="Phosphohistidine; by autocatalysis" evidence="3">
    <location>
        <position position="351"/>
    </location>
</feature>
<feature type="modified residue" description="4-aspartylphosphate" evidence="4">
    <location>
        <position position="661"/>
    </location>
</feature>
<feature type="disulfide bond" description="Interchain" evidence="1">
    <location>
        <position position="3"/>
    </location>
</feature>
<feature type="disulfide bond" description="Interchain" evidence="1">
    <location>
        <position position="5"/>
    </location>
</feature>
<feature type="sequence conflict" description="In Ref. 2; AAB39386." evidence="5" ref="2">
    <original>K</original>
    <variation>E</variation>
    <location>
        <position position="474"/>
    </location>
</feature>